<keyword id="KW-0002">3D-structure</keyword>
<keyword id="KW-0963">Cytoplasm</keyword>
<keyword id="KW-0238">DNA-binding</keyword>
<keyword id="KW-1185">Reference proteome</keyword>
<keyword id="KW-0678">Repressor</keyword>
<keyword id="KW-0804">Transcription</keyword>
<keyword id="KW-0805">Transcription regulation</keyword>
<gene>
    <name type="primary">phnF</name>
    <name type="ordered locus">MSMEG_0650</name>
    <name type="ordered locus">MSMEI_0633</name>
</gene>
<feature type="chain" id="PRO_0000357471" description="HTH-type transcriptional repressor PhnF">
    <location>
        <begin position="1"/>
        <end position="244"/>
    </location>
</feature>
<feature type="domain" description="HTH gntR-type" evidence="1">
    <location>
        <begin position="8"/>
        <end position="74"/>
    </location>
</feature>
<feature type="DNA-binding region" description="H-T-H motif" evidence="1">
    <location>
        <begin position="35"/>
        <end position="54"/>
    </location>
</feature>
<feature type="helix" evidence="4">
    <location>
        <begin position="11"/>
        <end position="25"/>
    </location>
</feature>
<feature type="helix" evidence="4">
    <location>
        <begin position="35"/>
        <end position="41"/>
    </location>
</feature>
<feature type="helix" evidence="4">
    <location>
        <begin position="46"/>
        <end position="58"/>
    </location>
</feature>
<feature type="strand" evidence="4">
    <location>
        <begin position="61"/>
        <end position="65"/>
    </location>
</feature>
<feature type="strand" evidence="4">
    <location>
        <begin position="68"/>
        <end position="71"/>
    </location>
</feature>
<feature type="strand" evidence="4">
    <location>
        <begin position="76"/>
        <end position="83"/>
    </location>
</feature>
<feature type="helix" evidence="4">
    <location>
        <begin position="85"/>
        <end position="90"/>
    </location>
</feature>
<feature type="turn" evidence="4">
    <location>
        <begin position="91"/>
        <end position="93"/>
    </location>
</feature>
<feature type="strand" evidence="4">
    <location>
        <begin position="96"/>
        <end position="107"/>
    </location>
</feature>
<feature type="helix" evidence="4">
    <location>
        <begin position="110"/>
        <end position="116"/>
    </location>
</feature>
<feature type="strand" evidence="4">
    <location>
        <begin position="123"/>
        <end position="133"/>
    </location>
</feature>
<feature type="strand" evidence="4">
    <location>
        <begin position="136"/>
        <end position="146"/>
    </location>
</feature>
<feature type="helix" evidence="4">
    <location>
        <begin position="147"/>
        <end position="149"/>
    </location>
</feature>
<feature type="helix" evidence="4">
    <location>
        <begin position="153"/>
        <end position="156"/>
    </location>
</feature>
<feature type="helix" evidence="4">
    <location>
        <begin position="163"/>
        <end position="169"/>
    </location>
</feature>
<feature type="strand" evidence="4">
    <location>
        <begin position="176"/>
        <end position="184"/>
    </location>
</feature>
<feature type="helix" evidence="4">
    <location>
        <begin position="188"/>
        <end position="194"/>
    </location>
</feature>
<feature type="strand" evidence="4">
    <location>
        <begin position="202"/>
        <end position="210"/>
    </location>
</feature>
<feature type="strand" evidence="4">
    <location>
        <begin position="216"/>
        <end position="225"/>
    </location>
</feature>
<feature type="helix" evidence="4">
    <location>
        <begin position="226"/>
        <end position="228"/>
    </location>
</feature>
<feature type="strand" evidence="4">
    <location>
        <begin position="229"/>
        <end position="237"/>
    </location>
</feature>
<sequence>MTAGAAPRILKHQVVRAELDRMLDGMRIGDPFPAEREIAEQFEVARETVRQALRELLIDGRVERRGRTTVVARPKIRQPLGMGSYTEAAKAQGLSAGRILVAWSDLTADEVLAGVLGVDVGAPVLQLERVLTTDGVRVGLETTKLPAQRYPGLRETFDHEASLYAEIRSRGIAFTRTVDTIDTALPDAREAALLGADARTPMFLLNRVSYDQDDVAIEQRRSLYRGDRMTFTAVMHAKNSAIVS</sequence>
<name>PHNF_MYCS2</name>
<proteinExistence type="evidence at protein level"/>
<organism>
    <name type="scientific">Mycolicibacterium smegmatis (strain ATCC 700084 / mc(2)155)</name>
    <name type="common">Mycobacterium smegmatis</name>
    <dbReference type="NCBI Taxonomy" id="246196"/>
    <lineage>
        <taxon>Bacteria</taxon>
        <taxon>Bacillati</taxon>
        <taxon>Actinomycetota</taxon>
        <taxon>Actinomycetes</taxon>
        <taxon>Mycobacteriales</taxon>
        <taxon>Mycobacteriaceae</taxon>
        <taxon>Mycolicibacterium</taxon>
    </lineage>
</organism>
<evidence type="ECO:0000255" key="1">
    <source>
        <dbReference type="PROSITE-ProRule" id="PRU00307"/>
    </source>
</evidence>
<evidence type="ECO:0000269" key="2">
    <source>
    </source>
</evidence>
<evidence type="ECO:0000305" key="3"/>
<evidence type="ECO:0007829" key="4">
    <source>
        <dbReference type="PDB" id="3F8M"/>
    </source>
</evidence>
<protein>
    <recommendedName>
        <fullName>HTH-type transcriptional repressor PhnF</fullName>
    </recommendedName>
</protein>
<dbReference type="EMBL" id="CP000480">
    <property type="protein sequence ID" value="ABK72651.1"/>
    <property type="status" value="ALT_INIT"/>
    <property type="molecule type" value="Genomic_DNA"/>
</dbReference>
<dbReference type="EMBL" id="CP001663">
    <property type="protein sequence ID" value="AFP37114.1"/>
    <property type="status" value="ALT_INIT"/>
    <property type="molecule type" value="Genomic_DNA"/>
</dbReference>
<dbReference type="RefSeq" id="YP_885060.1">
    <property type="nucleotide sequence ID" value="NC_008596.1"/>
</dbReference>
<dbReference type="PDB" id="3F8L">
    <property type="method" value="X-ray"/>
    <property type="resolution" value="1.90 A"/>
    <property type="chains" value="A/B/C/D=76-244"/>
</dbReference>
<dbReference type="PDB" id="3F8M">
    <property type="method" value="X-ray"/>
    <property type="resolution" value="1.80 A"/>
    <property type="chains" value="A/B=2-244"/>
</dbReference>
<dbReference type="PDBsum" id="3F8L"/>
<dbReference type="PDBsum" id="3F8M"/>
<dbReference type="SMR" id="A0QQ72"/>
<dbReference type="STRING" id="246196.MSMEG_0650"/>
<dbReference type="PaxDb" id="246196-MSMEI_0633"/>
<dbReference type="KEGG" id="msb:LJ00_03225"/>
<dbReference type="KEGG" id="msg:MSMEI_0633"/>
<dbReference type="KEGG" id="msm:MSMEG_0650"/>
<dbReference type="PATRIC" id="fig|246196.19.peg.646"/>
<dbReference type="eggNOG" id="COG2188">
    <property type="taxonomic scope" value="Bacteria"/>
</dbReference>
<dbReference type="OrthoDB" id="8584262at2"/>
<dbReference type="EvolutionaryTrace" id="A0QQ72"/>
<dbReference type="Proteomes" id="UP000000757">
    <property type="component" value="Chromosome"/>
</dbReference>
<dbReference type="Proteomes" id="UP000006158">
    <property type="component" value="Chromosome"/>
</dbReference>
<dbReference type="GO" id="GO:0005737">
    <property type="term" value="C:cytoplasm"/>
    <property type="evidence" value="ECO:0007669"/>
    <property type="project" value="UniProtKB-SubCell"/>
</dbReference>
<dbReference type="GO" id="GO:0003677">
    <property type="term" value="F:DNA binding"/>
    <property type="evidence" value="ECO:0007669"/>
    <property type="project" value="UniProtKB-KW"/>
</dbReference>
<dbReference type="GO" id="GO:0003700">
    <property type="term" value="F:DNA-binding transcription factor activity"/>
    <property type="evidence" value="ECO:0007669"/>
    <property type="project" value="InterPro"/>
</dbReference>
<dbReference type="GO" id="GO:0045892">
    <property type="term" value="P:negative regulation of DNA-templated transcription"/>
    <property type="evidence" value="ECO:0007669"/>
    <property type="project" value="TreeGrafter"/>
</dbReference>
<dbReference type="CDD" id="cd07377">
    <property type="entry name" value="WHTH_GntR"/>
    <property type="match status" value="1"/>
</dbReference>
<dbReference type="Gene3D" id="3.40.1410.10">
    <property type="entry name" value="Chorismate lyase-like"/>
    <property type="match status" value="1"/>
</dbReference>
<dbReference type="Gene3D" id="1.10.10.10">
    <property type="entry name" value="Winged helix-like DNA-binding domain superfamily/Winged helix DNA-binding domain"/>
    <property type="match status" value="1"/>
</dbReference>
<dbReference type="InterPro" id="IPR050679">
    <property type="entry name" value="Bact_HTH_transcr_reg"/>
</dbReference>
<dbReference type="InterPro" id="IPR028978">
    <property type="entry name" value="Chorismate_lyase_/UTRA_dom_sf"/>
</dbReference>
<dbReference type="InterPro" id="IPR000524">
    <property type="entry name" value="Tscrpt_reg_HTH_GntR"/>
</dbReference>
<dbReference type="InterPro" id="IPR011663">
    <property type="entry name" value="UTRA"/>
</dbReference>
<dbReference type="InterPro" id="IPR036388">
    <property type="entry name" value="WH-like_DNA-bd_sf"/>
</dbReference>
<dbReference type="InterPro" id="IPR036390">
    <property type="entry name" value="WH_DNA-bd_sf"/>
</dbReference>
<dbReference type="PANTHER" id="PTHR44846">
    <property type="entry name" value="MANNOSYL-D-GLYCERATE TRANSPORT/METABOLISM SYSTEM REPRESSOR MNGR-RELATED"/>
    <property type="match status" value="1"/>
</dbReference>
<dbReference type="PANTHER" id="PTHR44846:SF1">
    <property type="entry name" value="MANNOSYL-D-GLYCERATE TRANSPORT_METABOLISM SYSTEM REPRESSOR MNGR-RELATED"/>
    <property type="match status" value="1"/>
</dbReference>
<dbReference type="Pfam" id="PF00392">
    <property type="entry name" value="GntR"/>
    <property type="match status" value="1"/>
</dbReference>
<dbReference type="Pfam" id="PF07702">
    <property type="entry name" value="UTRA"/>
    <property type="match status" value="1"/>
</dbReference>
<dbReference type="PRINTS" id="PR00035">
    <property type="entry name" value="HTHGNTR"/>
</dbReference>
<dbReference type="SMART" id="SM00345">
    <property type="entry name" value="HTH_GNTR"/>
    <property type="match status" value="1"/>
</dbReference>
<dbReference type="SMART" id="SM00866">
    <property type="entry name" value="UTRA"/>
    <property type="match status" value="1"/>
</dbReference>
<dbReference type="SUPFAM" id="SSF64288">
    <property type="entry name" value="Chorismate lyase-like"/>
    <property type="match status" value="1"/>
</dbReference>
<dbReference type="SUPFAM" id="SSF46785">
    <property type="entry name" value="Winged helix' DNA-binding domain"/>
    <property type="match status" value="1"/>
</dbReference>
<dbReference type="PROSITE" id="PS50949">
    <property type="entry name" value="HTH_GNTR"/>
    <property type="match status" value="1"/>
</dbReference>
<reference key="1">
    <citation type="submission" date="2006-10" db="EMBL/GenBank/DDBJ databases">
        <authorList>
            <person name="Fleischmann R.D."/>
            <person name="Dodson R.J."/>
            <person name="Haft D.H."/>
            <person name="Merkel J.S."/>
            <person name="Nelson W.C."/>
            <person name="Fraser C.M."/>
        </authorList>
    </citation>
    <scope>NUCLEOTIDE SEQUENCE [LARGE SCALE GENOMIC DNA]</scope>
    <source>
        <strain>ATCC 700084 / mc(2)155</strain>
    </source>
</reference>
<reference key="2">
    <citation type="journal article" date="2007" name="Genome Biol.">
        <title>Interrupted coding sequences in Mycobacterium smegmatis: authentic mutations or sequencing errors?</title>
        <authorList>
            <person name="Deshayes C."/>
            <person name="Perrodou E."/>
            <person name="Gallien S."/>
            <person name="Euphrasie D."/>
            <person name="Schaeffer C."/>
            <person name="Van-Dorsselaer A."/>
            <person name="Poch O."/>
            <person name="Lecompte O."/>
            <person name="Reyrat J.-M."/>
        </authorList>
    </citation>
    <scope>NUCLEOTIDE SEQUENCE [LARGE SCALE GENOMIC DNA]</scope>
    <source>
        <strain>ATCC 700084 / mc(2)155</strain>
    </source>
</reference>
<reference key="3">
    <citation type="journal article" date="2009" name="Genome Res.">
        <title>Ortho-proteogenomics: multiple proteomes investigation through orthology and a new MS-based protocol.</title>
        <authorList>
            <person name="Gallien S."/>
            <person name="Perrodou E."/>
            <person name="Carapito C."/>
            <person name="Deshayes C."/>
            <person name="Reyrat J.-M."/>
            <person name="Van Dorsselaer A."/>
            <person name="Poch O."/>
            <person name="Schaeffer C."/>
            <person name="Lecompte O."/>
        </authorList>
    </citation>
    <scope>NUCLEOTIDE SEQUENCE [LARGE SCALE GENOMIC DNA]</scope>
    <source>
        <strain>ATCC 700084 / mc(2)155</strain>
    </source>
</reference>
<reference key="4">
    <citation type="journal article" date="2008" name="J. Bacteriol.">
        <title>Differential regulation of high-affinity phosphate transport systems of Mycobacterium smegmatis: identification of PhnF, a repressor of the phnDCE operon.</title>
        <authorList>
            <person name="Gebhard S."/>
            <person name="Cook G.M."/>
        </authorList>
    </citation>
    <scope>FUNCTION IN REGULATION OF PHOSPHATE-UPTAKE OPERON PHNDCE</scope>
    <scope>MAPPING OF TRANSCRIPTIONAL START SITE</scope>
    <scope>INDUCTION</scope>
</reference>
<accession>A0QQ72</accession>
<accession>I7G3P0</accession>
<comment type="function">
    <text evidence="2">Represses the phnDCE operon, involved in the uptake of phosphate, under conditions of phosphate availability in the cell.</text>
</comment>
<comment type="subcellular location">
    <subcellularLocation>
        <location evidence="3">Cytoplasm</location>
    </subcellularLocation>
</comment>
<comment type="induction">
    <text evidence="2">By phosphate.</text>
</comment>
<comment type="sequence caution" evidence="3">
    <conflict type="erroneous initiation">
        <sequence resource="EMBL-CDS" id="ABK72651"/>
    </conflict>
    <text>Extended N-terminus.</text>
</comment>
<comment type="sequence caution" evidence="3">
    <conflict type="erroneous initiation">
        <sequence resource="EMBL-CDS" id="AFP37114"/>
    </conflict>
    <text>Extended N-terminus.</text>
</comment>